<proteinExistence type="inferred from homology"/>
<organism>
    <name type="scientific">Rickettsia conorii (strain ATCC VR-613 / Malish 7)</name>
    <dbReference type="NCBI Taxonomy" id="272944"/>
    <lineage>
        <taxon>Bacteria</taxon>
        <taxon>Pseudomonadati</taxon>
        <taxon>Pseudomonadota</taxon>
        <taxon>Alphaproteobacteria</taxon>
        <taxon>Rickettsiales</taxon>
        <taxon>Rickettsiaceae</taxon>
        <taxon>Rickettsieae</taxon>
        <taxon>Rickettsia</taxon>
        <taxon>spotted fever group</taxon>
    </lineage>
</organism>
<feature type="chain" id="PRO_0000157173" description="Bifunctional methyltransferase">
    <location>
        <begin position="1"/>
        <end position="524"/>
    </location>
</feature>
<feature type="region of interest" description="RF MTase">
    <location>
        <begin position="1"/>
        <end position="308"/>
    </location>
</feature>
<feature type="region of interest" description="HemK">
    <location>
        <begin position="1"/>
        <end position="306"/>
    </location>
</feature>
<feature type="region of interest" description="tRNA (guanine-N(7)-)-methyltransferase">
    <location>
        <begin position="307"/>
        <end position="524"/>
    </location>
</feature>
<feature type="region of interest" description="tRNA MTase">
    <location>
        <begin position="311"/>
        <end position="524"/>
    </location>
</feature>
<feature type="active site" evidence="1">
    <location>
        <position position="427"/>
    </location>
</feature>
<feature type="binding site" evidence="1">
    <location>
        <begin position="146"/>
        <end position="150"/>
    </location>
    <ligand>
        <name>S-adenosyl-L-methionine</name>
        <dbReference type="ChEBI" id="CHEBI:59789"/>
    </ligand>
</feature>
<feature type="binding site" evidence="1">
    <location>
        <position position="169"/>
    </location>
    <ligand>
        <name>S-adenosyl-L-methionine</name>
        <dbReference type="ChEBI" id="CHEBI:59789"/>
    </ligand>
</feature>
<feature type="binding site" evidence="1">
    <location>
        <position position="198"/>
    </location>
    <ligand>
        <name>S-adenosyl-L-methionine</name>
        <dbReference type="ChEBI" id="CHEBI:59789"/>
    </ligand>
</feature>
<feature type="binding site" evidence="1">
    <location>
        <begin position="213"/>
        <end position="216"/>
    </location>
    <ligand>
        <name>substrate</name>
    </ligand>
</feature>
<feature type="binding site" evidence="1">
    <location>
        <position position="213"/>
    </location>
    <ligand>
        <name>S-adenosyl-L-methionine</name>
        <dbReference type="ChEBI" id="CHEBI:59789"/>
    </ligand>
</feature>
<feature type="binding site" evidence="1">
    <location>
        <position position="353"/>
    </location>
    <ligand>
        <name>S-adenosyl-L-methionine</name>
        <dbReference type="ChEBI" id="CHEBI:59789"/>
    </ligand>
</feature>
<feature type="binding site" evidence="1">
    <location>
        <position position="378"/>
    </location>
    <ligand>
        <name>S-adenosyl-L-methionine</name>
        <dbReference type="ChEBI" id="CHEBI:59789"/>
    </ligand>
</feature>
<feature type="binding site" evidence="1">
    <location>
        <position position="405"/>
    </location>
    <ligand>
        <name>S-adenosyl-L-methionine</name>
        <dbReference type="ChEBI" id="CHEBI:59789"/>
    </ligand>
</feature>
<feature type="binding site" evidence="1">
    <location>
        <position position="427"/>
    </location>
    <ligand>
        <name>S-adenosyl-L-methionine</name>
        <dbReference type="ChEBI" id="CHEBI:59789"/>
    </ligand>
</feature>
<feature type="binding site" evidence="1">
    <location>
        <position position="431"/>
    </location>
    <ligand>
        <name>substrate</name>
    </ligand>
</feature>
<feature type="binding site" evidence="1">
    <location>
        <position position="463"/>
    </location>
    <ligand>
        <name>substrate</name>
    </ligand>
</feature>
<gene>
    <name type="primary">prmC/trmB</name>
    <name type="synonym">hemK</name>
    <name type="ordered locus">RC1314</name>
</gene>
<keyword id="KW-0489">Methyltransferase</keyword>
<keyword id="KW-0949">S-adenosyl-L-methionine</keyword>
<keyword id="KW-0808">Transferase</keyword>
<keyword id="KW-0819">tRNA processing</keyword>
<protein>
    <recommendedName>
        <fullName>Bifunctional methyltransferase</fullName>
    </recommendedName>
    <domain>
        <recommendedName>
            <fullName>Release factor glutamine methyltransferase</fullName>
            <shortName>RF MTase</shortName>
            <ecNumber>2.1.1.297</ecNumber>
        </recommendedName>
        <alternativeName>
            <fullName>M.RcoHemKP</fullName>
        </alternativeName>
        <alternativeName>
            <fullName>N5-glutamine methyltransferase PrmC</fullName>
        </alternativeName>
        <alternativeName>
            <fullName>Protein-(glutamine-N5) MTase PrmC</fullName>
        </alternativeName>
        <alternativeName>
            <fullName>Protein-glutamine N-methyltransferase PrmC</fullName>
        </alternativeName>
    </domain>
    <domain>
        <recommendedName>
            <fullName>tRNA (guanine-N(7)-)-methyltransferase</fullName>
            <ecNumber>2.1.1.33</ecNumber>
        </recommendedName>
        <alternativeName>
            <fullName>tRNA (guanine(46)-N(7))-methyltransferase</fullName>
        </alternativeName>
        <alternativeName>
            <fullName>tRNA(m7G46)-methyltransferase</fullName>
        </alternativeName>
    </domain>
</protein>
<comment type="function">
    <text evidence="1">Methylates the class 1 translation termination release factors RF1/PrfA and RF2/PrfB on the glutamine residue of the universally conserved GGQ motif.</text>
</comment>
<comment type="function">
    <text evidence="1">Catalyzes the formation of N(7)-methylguanine at position 46 (m7G46) in tRNA.</text>
</comment>
<comment type="catalytic activity">
    <reaction>
        <text>L-glutaminyl-[peptide chain release factor] + S-adenosyl-L-methionine = N(5)-methyl-L-glutaminyl-[peptide chain release factor] + S-adenosyl-L-homocysteine + H(+)</text>
        <dbReference type="Rhea" id="RHEA:42896"/>
        <dbReference type="Rhea" id="RHEA-COMP:10271"/>
        <dbReference type="Rhea" id="RHEA-COMP:10272"/>
        <dbReference type="ChEBI" id="CHEBI:15378"/>
        <dbReference type="ChEBI" id="CHEBI:30011"/>
        <dbReference type="ChEBI" id="CHEBI:57856"/>
        <dbReference type="ChEBI" id="CHEBI:59789"/>
        <dbReference type="ChEBI" id="CHEBI:61891"/>
        <dbReference type="EC" id="2.1.1.297"/>
    </reaction>
</comment>
<comment type="catalytic activity">
    <reaction>
        <text>guanosine(46) in tRNA + S-adenosyl-L-methionine = N(7)-methylguanosine(46) in tRNA + S-adenosyl-L-homocysteine</text>
        <dbReference type="Rhea" id="RHEA:42708"/>
        <dbReference type="Rhea" id="RHEA-COMP:10188"/>
        <dbReference type="Rhea" id="RHEA-COMP:10189"/>
        <dbReference type="ChEBI" id="CHEBI:57856"/>
        <dbReference type="ChEBI" id="CHEBI:59789"/>
        <dbReference type="ChEBI" id="CHEBI:74269"/>
        <dbReference type="ChEBI" id="CHEBI:74480"/>
        <dbReference type="EC" id="2.1.1.33"/>
    </reaction>
</comment>
<comment type="similarity">
    <text evidence="2">In the C-terminal section; belongs to the class I-like SAM-binding methyltransferase superfamily. TrmB family.</text>
</comment>
<comment type="similarity">
    <text evidence="2">In the N-terminal section; belongs to the protein N5-glutamine methyltransferase family. PrmC subfamily.</text>
</comment>
<sequence>MQCSIKQILSDATDKLNKIGISSPQLEARILLQHVINKPIEYLLINLDEQLNEAKIEAFEKLLARRLKHEPIVYITGVKEFYSREFIVNKHVLIPRSDTEVLVDVVFQCHSRESGNPEKKQPNPCFRGNDISENCNDKFLNILELGTGSGCIAISLLCELPNANVIATDISLDAIDIIKSNAAKYEVTDRIQIIHSNWFENIETQKFDFIVSNPPYIAHSEKSEMAIETINYEPSIALFAEKDGLQAYFLIAENAKQFLKPNGKIILEIGFKQEEAVTQIFLDHGYNIESVYKDLQGHSRVILFSPINLNRSYARRIGKSLSGVQKNLLDNKLPKYLFSKEKLVNEKRKVFLEIGFGMGEHFINQAKMNPNALFIGIEVYLNGVANVLKLAGEQNITNFLLFPNNLDLILNEIPSNSLDGIYILFPDPWIKNKQKKKRIFNKERLKLLQDKLKDNGNLVFASDIENYFYEAIELIQQNGNFEIINKNDYLKPHDNYVITKYHQKAIKANRTPKFMILRHVLGDH</sequence>
<reference key="1">
    <citation type="journal article" date="2001" name="Science">
        <title>Mechanisms of evolution in Rickettsia conorii and R. prowazekii.</title>
        <authorList>
            <person name="Ogata H."/>
            <person name="Audic S."/>
            <person name="Renesto-Audiffren P."/>
            <person name="Fournier P.-E."/>
            <person name="Barbe V."/>
            <person name="Samson D."/>
            <person name="Roux V."/>
            <person name="Cossart P."/>
            <person name="Weissenbach J."/>
            <person name="Claverie J.-M."/>
            <person name="Raoult D."/>
        </authorList>
    </citation>
    <scope>NUCLEOTIDE SEQUENCE [LARGE SCALE GENOMIC DNA]</scope>
    <source>
        <strain>ATCC VR-613 / Malish 7</strain>
    </source>
</reference>
<evidence type="ECO:0000250" key="1"/>
<evidence type="ECO:0000305" key="2"/>
<name>RFTRM_RICCN</name>
<accession>Q92G13</accession>
<dbReference type="EC" id="2.1.1.297"/>
<dbReference type="EC" id="2.1.1.33"/>
<dbReference type="EMBL" id="AE006914">
    <property type="protein sequence ID" value="AAL03852.1"/>
    <property type="molecule type" value="Genomic_DNA"/>
</dbReference>
<dbReference type="PIR" id="B97864">
    <property type="entry name" value="B97864"/>
</dbReference>
<dbReference type="SMR" id="Q92G13"/>
<dbReference type="GeneID" id="928460"/>
<dbReference type="KEGG" id="rco:RC1314"/>
<dbReference type="HOGENOM" id="CLU_018398_3_3_5"/>
<dbReference type="Proteomes" id="UP000000816">
    <property type="component" value="Chromosome"/>
</dbReference>
<dbReference type="GO" id="GO:0003676">
    <property type="term" value="F:nucleic acid binding"/>
    <property type="evidence" value="ECO:0007669"/>
    <property type="project" value="InterPro"/>
</dbReference>
<dbReference type="GO" id="GO:0102559">
    <property type="term" value="F:protein-(glutamine-N5) methyltransferase activity"/>
    <property type="evidence" value="ECO:0007669"/>
    <property type="project" value="UniProtKB-EC"/>
</dbReference>
<dbReference type="GO" id="GO:0036009">
    <property type="term" value="F:protein-glutamine N-methyltransferase activity"/>
    <property type="evidence" value="ECO:0007669"/>
    <property type="project" value="UniProtKB-UniRule"/>
</dbReference>
<dbReference type="GO" id="GO:0008176">
    <property type="term" value="F:tRNA (guanine(46)-N7)-methyltransferase activity"/>
    <property type="evidence" value="ECO:0007669"/>
    <property type="project" value="UniProtKB-UniRule"/>
</dbReference>
<dbReference type="CDD" id="cd02440">
    <property type="entry name" value="AdoMet_MTases"/>
    <property type="match status" value="1"/>
</dbReference>
<dbReference type="Gene3D" id="1.10.8.10">
    <property type="entry name" value="DNA helicase RuvA subunit, C-terminal domain"/>
    <property type="match status" value="1"/>
</dbReference>
<dbReference type="Gene3D" id="3.40.50.150">
    <property type="entry name" value="Vaccinia Virus protein VP39"/>
    <property type="match status" value="2"/>
</dbReference>
<dbReference type="HAMAP" id="MF_02126">
    <property type="entry name" value="RF_methyltr_PrmC"/>
    <property type="match status" value="1"/>
</dbReference>
<dbReference type="HAMAP" id="MF_01057">
    <property type="entry name" value="tRNA_methyltr_TrmB"/>
    <property type="match status" value="1"/>
</dbReference>
<dbReference type="InterPro" id="IPR002052">
    <property type="entry name" value="DNA_methylase_N6_adenine_CS"/>
</dbReference>
<dbReference type="InterPro" id="IPR004556">
    <property type="entry name" value="HemK-like"/>
</dbReference>
<dbReference type="InterPro" id="IPR050320">
    <property type="entry name" value="N5-glutamine_MTase"/>
</dbReference>
<dbReference type="InterPro" id="IPR040758">
    <property type="entry name" value="PrmC_N"/>
</dbReference>
<dbReference type="InterPro" id="IPR019874">
    <property type="entry name" value="RF_methyltr_PrmC"/>
</dbReference>
<dbReference type="InterPro" id="IPR029063">
    <property type="entry name" value="SAM-dependent_MTases_sf"/>
</dbReference>
<dbReference type="InterPro" id="IPR007848">
    <property type="entry name" value="Small_mtfrase_dom"/>
</dbReference>
<dbReference type="InterPro" id="IPR003358">
    <property type="entry name" value="tRNA_(Gua-N-7)_MeTrfase_Trmb"/>
</dbReference>
<dbReference type="InterPro" id="IPR055361">
    <property type="entry name" value="tRNA_methyltr_TrmB_bact"/>
</dbReference>
<dbReference type="NCBIfam" id="TIGR00536">
    <property type="entry name" value="hemK_fam"/>
    <property type="match status" value="1"/>
</dbReference>
<dbReference type="NCBIfam" id="NF002421">
    <property type="entry name" value="PRK01544.1"/>
    <property type="match status" value="1"/>
</dbReference>
<dbReference type="NCBIfam" id="TIGR03534">
    <property type="entry name" value="RF_mod_PrmC"/>
    <property type="match status" value="1"/>
</dbReference>
<dbReference type="NCBIfam" id="TIGR00091">
    <property type="entry name" value="tRNA (guanosine(46)-N7)-methyltransferase TrmB"/>
    <property type="match status" value="1"/>
</dbReference>
<dbReference type="PANTHER" id="PTHR18895">
    <property type="entry name" value="HEMK METHYLTRANSFERASE"/>
    <property type="match status" value="1"/>
</dbReference>
<dbReference type="PANTHER" id="PTHR18895:SF74">
    <property type="entry name" value="MTRF1L RELEASE FACTOR GLUTAMINE METHYLTRANSFERASE"/>
    <property type="match status" value="1"/>
</dbReference>
<dbReference type="Pfam" id="PF02390">
    <property type="entry name" value="Methyltransf_4"/>
    <property type="match status" value="1"/>
</dbReference>
<dbReference type="Pfam" id="PF05175">
    <property type="entry name" value="MTS"/>
    <property type="match status" value="1"/>
</dbReference>
<dbReference type="Pfam" id="PF17827">
    <property type="entry name" value="PrmC_N"/>
    <property type="match status" value="1"/>
</dbReference>
<dbReference type="SUPFAM" id="SSF53335">
    <property type="entry name" value="S-adenosyl-L-methionine-dependent methyltransferases"/>
    <property type="match status" value="2"/>
</dbReference>
<dbReference type="PROSITE" id="PS51625">
    <property type="entry name" value="SAM_MT_TRMB"/>
    <property type="match status" value="1"/>
</dbReference>